<sequence>MVVGDFPIETDTIVIGAGPGGYVAAIRAAQLGQKVTIVEKGNLGGVCLNVGCIPSKALLHASHRFVEAQHSENLGVIAESVSLNFQKVQEFKSSVVNKLTGGVEGLLKGNKVNIVKGEAYFVDNNSLRVMDEKSAQTYNFKNAIIATGSRPIEIPNFKFGKRVIDSTGALNLQEVPGKLVVVGGGYIGSELGTAFANFGSEVTILEGAKDILGGFEKQMTQPVKKGMKEKGVEIVTEAMAKSAEETDNGVKVTYEAKGEEKTIEADYVLVTVGRRPNTDELGLEELGVKFADRGLLEVDKQSRTSISNIYAIGDIVPGLPLAHKASYEAKVAAEAIDGQAAEVDYIGMPAVCFTEPELATVGYSEAQAKEEGLAIKASKFPYAANGRALSLDDTNGFVKLITLKEDDTLIGAQVVGTGASDIISELGLAIEAGMNAEDIALTIHAHPTLGEMTMEAAEKAIGYPIHTM</sequence>
<keyword id="KW-0963">Cytoplasm</keyword>
<keyword id="KW-1015">Disulfide bond</keyword>
<keyword id="KW-0274">FAD</keyword>
<keyword id="KW-0285">Flavoprotein</keyword>
<keyword id="KW-0472">Membrane</keyword>
<keyword id="KW-0520">NAD</keyword>
<keyword id="KW-0560">Oxidoreductase</keyword>
<keyword id="KW-0676">Redox-active center</keyword>
<protein>
    <recommendedName>
        <fullName>Dihydrolipoyl dehydrogenase</fullName>
        <ecNumber>1.8.1.4</ecNumber>
    </recommendedName>
    <alternativeName>
        <fullName>Dihydrolipoamide dehydrogenase</fullName>
    </alternativeName>
    <alternativeName>
        <fullName>E3 component of pyruvate complex</fullName>
    </alternativeName>
    <alternativeName>
        <fullName>Membrane-bound ribosome protein complex 50 kDa subunit</fullName>
    </alternativeName>
</protein>
<comment type="function">
    <text evidence="1">Lipoamide dehydrogenase is a component of the alpha-ketoacid dehydrogenase complexes.</text>
</comment>
<comment type="catalytic activity">
    <reaction>
        <text>N(6)-[(R)-dihydrolipoyl]-L-lysyl-[protein] + NAD(+) = N(6)-[(R)-lipoyl]-L-lysyl-[protein] + NADH + H(+)</text>
        <dbReference type="Rhea" id="RHEA:15045"/>
        <dbReference type="Rhea" id="RHEA-COMP:10474"/>
        <dbReference type="Rhea" id="RHEA-COMP:10475"/>
        <dbReference type="ChEBI" id="CHEBI:15378"/>
        <dbReference type="ChEBI" id="CHEBI:57540"/>
        <dbReference type="ChEBI" id="CHEBI:57945"/>
        <dbReference type="ChEBI" id="CHEBI:83099"/>
        <dbReference type="ChEBI" id="CHEBI:83100"/>
        <dbReference type="EC" id="1.8.1.4"/>
    </reaction>
</comment>
<comment type="cofactor">
    <cofactor evidence="1">
        <name>FAD</name>
        <dbReference type="ChEBI" id="CHEBI:57692"/>
    </cofactor>
    <text evidence="1">Binds 1 FAD per subunit.</text>
</comment>
<comment type="subunit">
    <text evidence="1">Homodimer.</text>
</comment>
<comment type="subcellular location">
    <subcellularLocation>
        <location evidence="2">Cytoplasm</location>
    </subcellularLocation>
    <subcellularLocation>
        <location>Membrane</location>
        <topology>Peripheral membrane protein</topology>
    </subcellularLocation>
</comment>
<comment type="miscellaneous">
    <text>The active site is a redox-active disulfide bond.</text>
</comment>
<comment type="similarity">
    <text evidence="2">Belongs to the class-I pyridine nucleotide-disulfide oxidoreductase family.</text>
</comment>
<name>DLDH_STAAR</name>
<reference key="1">
    <citation type="journal article" date="2004" name="Proc. Natl. Acad. Sci. U.S.A.">
        <title>Complete genomes of two clinical Staphylococcus aureus strains: evidence for the rapid evolution of virulence and drug resistance.</title>
        <authorList>
            <person name="Holden M.T.G."/>
            <person name="Feil E.J."/>
            <person name="Lindsay J.A."/>
            <person name="Peacock S.J."/>
            <person name="Day N.P.J."/>
            <person name="Enright M.C."/>
            <person name="Foster T.J."/>
            <person name="Moore C.E."/>
            <person name="Hurst L."/>
            <person name="Atkin R."/>
            <person name="Barron A."/>
            <person name="Bason N."/>
            <person name="Bentley S.D."/>
            <person name="Chillingworth C."/>
            <person name="Chillingworth T."/>
            <person name="Churcher C."/>
            <person name="Clark L."/>
            <person name="Corton C."/>
            <person name="Cronin A."/>
            <person name="Doggett J."/>
            <person name="Dowd L."/>
            <person name="Feltwell T."/>
            <person name="Hance Z."/>
            <person name="Harris B."/>
            <person name="Hauser H."/>
            <person name="Holroyd S."/>
            <person name="Jagels K."/>
            <person name="James K.D."/>
            <person name="Lennard N."/>
            <person name="Line A."/>
            <person name="Mayes R."/>
            <person name="Moule S."/>
            <person name="Mungall K."/>
            <person name="Ormond D."/>
            <person name="Quail M.A."/>
            <person name="Rabbinowitsch E."/>
            <person name="Rutherford K.M."/>
            <person name="Sanders M."/>
            <person name="Sharp S."/>
            <person name="Simmonds M."/>
            <person name="Stevens K."/>
            <person name="Whitehead S."/>
            <person name="Barrell B.G."/>
            <person name="Spratt B.G."/>
            <person name="Parkhill J."/>
        </authorList>
    </citation>
    <scope>NUCLEOTIDE SEQUENCE [LARGE SCALE GENOMIC DNA]</scope>
    <source>
        <strain>MRSA252</strain>
    </source>
</reference>
<organism>
    <name type="scientific">Staphylococcus aureus (strain MRSA252)</name>
    <dbReference type="NCBI Taxonomy" id="282458"/>
    <lineage>
        <taxon>Bacteria</taxon>
        <taxon>Bacillati</taxon>
        <taxon>Bacillota</taxon>
        <taxon>Bacilli</taxon>
        <taxon>Bacillales</taxon>
        <taxon>Staphylococcaceae</taxon>
        <taxon>Staphylococcus</taxon>
    </lineage>
</organism>
<feature type="chain" id="PRO_0000068047" description="Dihydrolipoyl dehydrogenase">
    <location>
        <begin position="1"/>
        <end position="468"/>
    </location>
</feature>
<feature type="active site" description="Proton acceptor" evidence="1">
    <location>
        <position position="446"/>
    </location>
</feature>
<feature type="binding site" evidence="1">
    <location>
        <begin position="39"/>
        <end position="47"/>
    </location>
    <ligand>
        <name>FAD</name>
        <dbReference type="ChEBI" id="CHEBI:57692"/>
    </ligand>
</feature>
<feature type="binding site" evidence="1">
    <location>
        <position position="56"/>
    </location>
    <ligand>
        <name>FAD</name>
        <dbReference type="ChEBI" id="CHEBI:57692"/>
    </ligand>
</feature>
<feature type="binding site" evidence="1">
    <location>
        <position position="119"/>
    </location>
    <ligand>
        <name>FAD</name>
        <dbReference type="ChEBI" id="CHEBI:57692"/>
    </ligand>
</feature>
<feature type="binding site" evidence="1">
    <location>
        <begin position="183"/>
        <end position="187"/>
    </location>
    <ligand>
        <name>NAD(+)</name>
        <dbReference type="ChEBI" id="CHEBI:57540"/>
    </ligand>
</feature>
<feature type="binding site" evidence="1">
    <location>
        <position position="206"/>
    </location>
    <ligand>
        <name>NAD(+)</name>
        <dbReference type="ChEBI" id="CHEBI:57540"/>
    </ligand>
</feature>
<feature type="binding site" evidence="1">
    <location>
        <begin position="271"/>
        <end position="274"/>
    </location>
    <ligand>
        <name>NAD(+)</name>
        <dbReference type="ChEBI" id="CHEBI:57540"/>
    </ligand>
</feature>
<feature type="binding site" evidence="1">
    <location>
        <position position="314"/>
    </location>
    <ligand>
        <name>FAD</name>
        <dbReference type="ChEBI" id="CHEBI:57692"/>
    </ligand>
</feature>
<feature type="binding site" evidence="1">
    <location>
        <position position="322"/>
    </location>
    <ligand>
        <name>FAD</name>
        <dbReference type="ChEBI" id="CHEBI:57692"/>
    </ligand>
</feature>
<feature type="disulfide bond" description="Redox-active" evidence="1">
    <location>
        <begin position="47"/>
        <end position="52"/>
    </location>
</feature>
<accession>Q6GHY9</accession>
<proteinExistence type="inferred from homology"/>
<evidence type="ECO:0000250" key="1"/>
<evidence type="ECO:0000305" key="2"/>
<dbReference type="EC" id="1.8.1.4"/>
<dbReference type="EMBL" id="BX571856">
    <property type="protein sequence ID" value="CAG40072.1"/>
    <property type="molecule type" value="Genomic_DNA"/>
</dbReference>
<dbReference type="SMR" id="Q6GHY9"/>
<dbReference type="KEGG" id="sar:SAR1070"/>
<dbReference type="HOGENOM" id="CLU_016755_0_3_9"/>
<dbReference type="Proteomes" id="UP000000596">
    <property type="component" value="Chromosome"/>
</dbReference>
<dbReference type="GO" id="GO:0005737">
    <property type="term" value="C:cytoplasm"/>
    <property type="evidence" value="ECO:0007669"/>
    <property type="project" value="UniProtKB-SubCell"/>
</dbReference>
<dbReference type="GO" id="GO:0016020">
    <property type="term" value="C:membrane"/>
    <property type="evidence" value="ECO:0007669"/>
    <property type="project" value="UniProtKB-SubCell"/>
</dbReference>
<dbReference type="GO" id="GO:0004148">
    <property type="term" value="F:dihydrolipoyl dehydrogenase (NADH) activity"/>
    <property type="evidence" value="ECO:0007669"/>
    <property type="project" value="UniProtKB-EC"/>
</dbReference>
<dbReference type="GO" id="GO:0050660">
    <property type="term" value="F:flavin adenine dinucleotide binding"/>
    <property type="evidence" value="ECO:0007669"/>
    <property type="project" value="InterPro"/>
</dbReference>
<dbReference type="GO" id="GO:0006103">
    <property type="term" value="P:2-oxoglutarate metabolic process"/>
    <property type="evidence" value="ECO:0007669"/>
    <property type="project" value="TreeGrafter"/>
</dbReference>
<dbReference type="FunFam" id="3.30.390.30:FF:000001">
    <property type="entry name" value="Dihydrolipoyl dehydrogenase"/>
    <property type="match status" value="1"/>
</dbReference>
<dbReference type="FunFam" id="3.50.50.60:FF:000037">
    <property type="entry name" value="Dihydrolipoyl dehydrogenase"/>
    <property type="match status" value="1"/>
</dbReference>
<dbReference type="Gene3D" id="3.30.390.30">
    <property type="match status" value="1"/>
</dbReference>
<dbReference type="Gene3D" id="3.50.50.60">
    <property type="entry name" value="FAD/NAD(P)-binding domain"/>
    <property type="match status" value="2"/>
</dbReference>
<dbReference type="InterPro" id="IPR050151">
    <property type="entry name" value="Class-I_Pyr_Nuc-Dis_Oxidored"/>
</dbReference>
<dbReference type="InterPro" id="IPR036188">
    <property type="entry name" value="FAD/NAD-bd_sf"/>
</dbReference>
<dbReference type="InterPro" id="IPR023753">
    <property type="entry name" value="FAD/NAD-binding_dom"/>
</dbReference>
<dbReference type="InterPro" id="IPR016156">
    <property type="entry name" value="FAD/NAD-linked_Rdtase_dimer_sf"/>
</dbReference>
<dbReference type="InterPro" id="IPR006258">
    <property type="entry name" value="Lipoamide_DH"/>
</dbReference>
<dbReference type="InterPro" id="IPR001100">
    <property type="entry name" value="Pyr_nuc-diS_OxRdtase"/>
</dbReference>
<dbReference type="InterPro" id="IPR004099">
    <property type="entry name" value="Pyr_nucl-diS_OxRdtase_dimer"/>
</dbReference>
<dbReference type="InterPro" id="IPR012999">
    <property type="entry name" value="Pyr_OxRdtase_I_AS"/>
</dbReference>
<dbReference type="NCBIfam" id="TIGR01350">
    <property type="entry name" value="lipoamide_DH"/>
    <property type="match status" value="1"/>
</dbReference>
<dbReference type="PANTHER" id="PTHR22912:SF160">
    <property type="entry name" value="DIHYDROLIPOYL DEHYDROGENASE"/>
    <property type="match status" value="1"/>
</dbReference>
<dbReference type="PANTHER" id="PTHR22912">
    <property type="entry name" value="DISULFIDE OXIDOREDUCTASE"/>
    <property type="match status" value="1"/>
</dbReference>
<dbReference type="Pfam" id="PF07992">
    <property type="entry name" value="Pyr_redox_2"/>
    <property type="match status" value="1"/>
</dbReference>
<dbReference type="Pfam" id="PF02852">
    <property type="entry name" value="Pyr_redox_dim"/>
    <property type="match status" value="1"/>
</dbReference>
<dbReference type="PIRSF" id="PIRSF000350">
    <property type="entry name" value="Mercury_reductase_MerA"/>
    <property type="match status" value="1"/>
</dbReference>
<dbReference type="PRINTS" id="PR00368">
    <property type="entry name" value="FADPNR"/>
</dbReference>
<dbReference type="PRINTS" id="PR00411">
    <property type="entry name" value="PNDRDTASEI"/>
</dbReference>
<dbReference type="SUPFAM" id="SSF51905">
    <property type="entry name" value="FAD/NAD(P)-binding domain"/>
    <property type="match status" value="1"/>
</dbReference>
<dbReference type="SUPFAM" id="SSF55424">
    <property type="entry name" value="FAD/NAD-linked reductases, dimerisation (C-terminal) domain"/>
    <property type="match status" value="1"/>
</dbReference>
<dbReference type="PROSITE" id="PS00076">
    <property type="entry name" value="PYRIDINE_REDOX_1"/>
    <property type="match status" value="1"/>
</dbReference>
<gene>
    <name type="primary">pdhD</name>
    <name type="ordered locus">SAR1070</name>
</gene>